<organism>
    <name type="scientific">Phocaeicola vulgatus (strain ATCC 8482 / DSM 1447 / JCM 5826 / CCUG 4940 / NBRC 14291 / NCTC 11154)</name>
    <name type="common">Bacteroides vulgatus</name>
    <dbReference type="NCBI Taxonomy" id="435590"/>
    <lineage>
        <taxon>Bacteria</taxon>
        <taxon>Pseudomonadati</taxon>
        <taxon>Bacteroidota</taxon>
        <taxon>Bacteroidia</taxon>
        <taxon>Bacteroidales</taxon>
        <taxon>Bacteroidaceae</taxon>
        <taxon>Phocaeicola</taxon>
    </lineage>
</organism>
<sequence length="188" mass="21125">MINAQDIKIGTAIRMDGKLYFCIDFLHVKPGKGNTFMRTKLKDVVNGYVLERRFNIGEKLEDVRVERRPHQYLYMEGADYIFMNQETFDQIPIAHDLINGVDFLLEGMVVDVVSDASTETVLFADVPVKVQMKITYTEPGLKGDTATNTLKPATVESGATVRVPLFINEGETIEIDTRDGSYVGRVKA</sequence>
<feature type="chain" id="PRO_1000010685" description="Elongation factor P">
    <location>
        <begin position="1"/>
        <end position="188"/>
    </location>
</feature>
<name>EFP_PHOV8</name>
<dbReference type="EMBL" id="CP000139">
    <property type="protein sequence ID" value="ABR38239.1"/>
    <property type="molecule type" value="Genomic_DNA"/>
</dbReference>
<dbReference type="RefSeq" id="WP_005840678.1">
    <property type="nucleotide sequence ID" value="NZ_JANSWM010000025.1"/>
</dbReference>
<dbReference type="SMR" id="A6KXS5"/>
<dbReference type="STRING" id="435590.BVU_0529"/>
<dbReference type="PaxDb" id="435590-BVU_0529"/>
<dbReference type="GeneID" id="82155584"/>
<dbReference type="KEGG" id="bvu:BVU_0529"/>
<dbReference type="eggNOG" id="COG0231">
    <property type="taxonomic scope" value="Bacteria"/>
</dbReference>
<dbReference type="HOGENOM" id="CLU_074944_0_1_10"/>
<dbReference type="BioCyc" id="BVUL435590:G1G59-555-MONOMER"/>
<dbReference type="UniPathway" id="UPA00345"/>
<dbReference type="Proteomes" id="UP000002861">
    <property type="component" value="Chromosome"/>
</dbReference>
<dbReference type="GO" id="GO:0005737">
    <property type="term" value="C:cytoplasm"/>
    <property type="evidence" value="ECO:0007669"/>
    <property type="project" value="UniProtKB-SubCell"/>
</dbReference>
<dbReference type="GO" id="GO:0003746">
    <property type="term" value="F:translation elongation factor activity"/>
    <property type="evidence" value="ECO:0007669"/>
    <property type="project" value="UniProtKB-UniRule"/>
</dbReference>
<dbReference type="GO" id="GO:0043043">
    <property type="term" value="P:peptide biosynthetic process"/>
    <property type="evidence" value="ECO:0007669"/>
    <property type="project" value="InterPro"/>
</dbReference>
<dbReference type="CDD" id="cd04470">
    <property type="entry name" value="S1_EF-P_repeat_1"/>
    <property type="match status" value="1"/>
</dbReference>
<dbReference type="CDD" id="cd05794">
    <property type="entry name" value="S1_EF-P_repeat_2"/>
    <property type="match status" value="1"/>
</dbReference>
<dbReference type="FunFam" id="2.30.30.30:FF:000003">
    <property type="entry name" value="Elongation factor P"/>
    <property type="match status" value="1"/>
</dbReference>
<dbReference type="FunFam" id="2.40.50.140:FF:000004">
    <property type="entry name" value="Elongation factor P"/>
    <property type="match status" value="1"/>
</dbReference>
<dbReference type="FunFam" id="2.40.50.140:FF:000009">
    <property type="entry name" value="Elongation factor P"/>
    <property type="match status" value="1"/>
</dbReference>
<dbReference type="Gene3D" id="2.30.30.30">
    <property type="match status" value="1"/>
</dbReference>
<dbReference type="Gene3D" id="2.40.50.140">
    <property type="entry name" value="Nucleic acid-binding proteins"/>
    <property type="match status" value="2"/>
</dbReference>
<dbReference type="HAMAP" id="MF_00141">
    <property type="entry name" value="EF_P"/>
    <property type="match status" value="1"/>
</dbReference>
<dbReference type="InterPro" id="IPR015365">
    <property type="entry name" value="Elong-fact-P_C"/>
</dbReference>
<dbReference type="InterPro" id="IPR012340">
    <property type="entry name" value="NA-bd_OB-fold"/>
</dbReference>
<dbReference type="InterPro" id="IPR014722">
    <property type="entry name" value="Rib_uL2_dom2"/>
</dbReference>
<dbReference type="InterPro" id="IPR020599">
    <property type="entry name" value="Transl_elong_fac_P/YeiP"/>
</dbReference>
<dbReference type="InterPro" id="IPR013185">
    <property type="entry name" value="Transl_elong_KOW-like"/>
</dbReference>
<dbReference type="InterPro" id="IPR001059">
    <property type="entry name" value="Transl_elong_P/YeiP_cen"/>
</dbReference>
<dbReference type="InterPro" id="IPR013852">
    <property type="entry name" value="Transl_elong_P/YeiP_CS"/>
</dbReference>
<dbReference type="InterPro" id="IPR011768">
    <property type="entry name" value="Transl_elongation_fac_P"/>
</dbReference>
<dbReference type="InterPro" id="IPR008991">
    <property type="entry name" value="Translation_prot_SH3-like_sf"/>
</dbReference>
<dbReference type="NCBIfam" id="TIGR00038">
    <property type="entry name" value="efp"/>
    <property type="match status" value="1"/>
</dbReference>
<dbReference type="NCBIfam" id="NF001810">
    <property type="entry name" value="PRK00529.1"/>
    <property type="match status" value="1"/>
</dbReference>
<dbReference type="PANTHER" id="PTHR30053">
    <property type="entry name" value="ELONGATION FACTOR P"/>
    <property type="match status" value="1"/>
</dbReference>
<dbReference type="PANTHER" id="PTHR30053:SF12">
    <property type="entry name" value="ELONGATION FACTOR P (EF-P) FAMILY PROTEIN"/>
    <property type="match status" value="1"/>
</dbReference>
<dbReference type="Pfam" id="PF01132">
    <property type="entry name" value="EFP"/>
    <property type="match status" value="1"/>
</dbReference>
<dbReference type="Pfam" id="PF08207">
    <property type="entry name" value="EFP_N"/>
    <property type="match status" value="1"/>
</dbReference>
<dbReference type="Pfam" id="PF09285">
    <property type="entry name" value="Elong-fact-P_C"/>
    <property type="match status" value="1"/>
</dbReference>
<dbReference type="PIRSF" id="PIRSF005901">
    <property type="entry name" value="EF-P"/>
    <property type="match status" value="1"/>
</dbReference>
<dbReference type="SMART" id="SM01185">
    <property type="entry name" value="EFP"/>
    <property type="match status" value="1"/>
</dbReference>
<dbReference type="SMART" id="SM00841">
    <property type="entry name" value="Elong-fact-P_C"/>
    <property type="match status" value="1"/>
</dbReference>
<dbReference type="SUPFAM" id="SSF50249">
    <property type="entry name" value="Nucleic acid-binding proteins"/>
    <property type="match status" value="2"/>
</dbReference>
<dbReference type="SUPFAM" id="SSF50104">
    <property type="entry name" value="Translation proteins SH3-like domain"/>
    <property type="match status" value="1"/>
</dbReference>
<dbReference type="PROSITE" id="PS01275">
    <property type="entry name" value="EFP"/>
    <property type="match status" value="1"/>
</dbReference>
<protein>
    <recommendedName>
        <fullName evidence="1">Elongation factor P</fullName>
        <shortName evidence="1">EF-P</shortName>
    </recommendedName>
</protein>
<evidence type="ECO:0000255" key="1">
    <source>
        <dbReference type="HAMAP-Rule" id="MF_00141"/>
    </source>
</evidence>
<reference key="1">
    <citation type="journal article" date="2007" name="PLoS Biol.">
        <title>Evolution of symbiotic bacteria in the distal human intestine.</title>
        <authorList>
            <person name="Xu J."/>
            <person name="Mahowald M.A."/>
            <person name="Ley R.E."/>
            <person name="Lozupone C.A."/>
            <person name="Hamady M."/>
            <person name="Martens E.C."/>
            <person name="Henrissat B."/>
            <person name="Coutinho P.M."/>
            <person name="Minx P."/>
            <person name="Latreille P."/>
            <person name="Cordum H."/>
            <person name="Van Brunt A."/>
            <person name="Kim K."/>
            <person name="Fulton R.S."/>
            <person name="Fulton L.A."/>
            <person name="Clifton S.W."/>
            <person name="Wilson R.K."/>
            <person name="Knight R.D."/>
            <person name="Gordon J.I."/>
        </authorList>
    </citation>
    <scope>NUCLEOTIDE SEQUENCE [LARGE SCALE GENOMIC DNA]</scope>
    <source>
        <strain>ATCC 8482 / DSM 1447 / JCM 5826 / CCUG 4940 / NBRC 14291 / NCTC 11154</strain>
    </source>
</reference>
<gene>
    <name evidence="1" type="primary">efp</name>
    <name type="ordered locus">BVU_0529</name>
</gene>
<proteinExistence type="inferred from homology"/>
<accession>A6KXS5</accession>
<keyword id="KW-0963">Cytoplasm</keyword>
<keyword id="KW-0251">Elongation factor</keyword>
<keyword id="KW-0648">Protein biosynthesis</keyword>
<comment type="function">
    <text evidence="1">Involved in peptide bond synthesis. Stimulates efficient translation and peptide-bond synthesis on native or reconstituted 70S ribosomes in vitro. Probably functions indirectly by altering the affinity of the ribosome for aminoacyl-tRNA, thus increasing their reactivity as acceptors for peptidyl transferase.</text>
</comment>
<comment type="pathway">
    <text evidence="1">Protein biosynthesis; polypeptide chain elongation.</text>
</comment>
<comment type="subcellular location">
    <subcellularLocation>
        <location evidence="1">Cytoplasm</location>
    </subcellularLocation>
</comment>
<comment type="similarity">
    <text evidence="1">Belongs to the elongation factor P family.</text>
</comment>